<reference key="1">
    <citation type="submission" date="2007-11" db="EMBL/GenBank/DDBJ databases">
        <authorList>
            <consortium name="The Salmonella enterica serovar Arizonae Genome Sequencing Project"/>
            <person name="McClelland M."/>
            <person name="Sanderson E.K."/>
            <person name="Porwollik S."/>
            <person name="Spieth J."/>
            <person name="Clifton W.S."/>
            <person name="Fulton R."/>
            <person name="Chunyan W."/>
            <person name="Wollam A."/>
            <person name="Shah N."/>
            <person name="Pepin K."/>
            <person name="Bhonagiri V."/>
            <person name="Nash W."/>
            <person name="Johnson M."/>
            <person name="Thiruvilangam P."/>
            <person name="Wilson R."/>
        </authorList>
    </citation>
    <scope>NUCLEOTIDE SEQUENCE [LARGE SCALE GENOMIC DNA]</scope>
    <source>
        <strain>ATCC BAA-731 / CDC346-86 / RSK2980</strain>
    </source>
</reference>
<sequence>MKKKASLSEEDQTLFRQLMVGTRQIKQDTIVHRPQRKKITEVPTRRLIQEQADASHYFSDEFQPLLNTEGPVKYVREDVSHFELKKMRRGDYSPELFLDLHGLTQLQAKQELGALITACRREHIFCACVMHGHGKHILKQQTPLWLAQHPHVMAFHQAPKEYGGDAALLVLIEVEEWQPPELP</sequence>
<evidence type="ECO:0000255" key="1">
    <source>
        <dbReference type="HAMAP-Rule" id="MF_01042"/>
    </source>
</evidence>
<comment type="function">
    <text evidence="1">Acts as a ribosome collision sensor. Detects stalled/collided disomes (pairs of ribosomes where the leading ribosome is stalled and a second ribosome has collided with it) and endonucleolytically cleaves mRNA at the 5' boundary of the stalled ribosome. Stalled/collided disomes form a new interface (primarily via the 30S subunits) that binds SmrB. Cleaved mRNA becomes available for tmRNA ligation, leading to ribosomal subunit dissociation and rescue of stalled ribosomes.</text>
</comment>
<comment type="subunit">
    <text evidence="1">Associates with collided ribosomes, but not with correctly translating polysomes.</text>
</comment>
<comment type="similarity">
    <text evidence="1">Belongs to the SmrB family.</text>
</comment>
<proteinExistence type="inferred from homology"/>
<organism>
    <name type="scientific">Salmonella arizonae (strain ATCC BAA-731 / CDC346-86 / RSK2980)</name>
    <dbReference type="NCBI Taxonomy" id="41514"/>
    <lineage>
        <taxon>Bacteria</taxon>
        <taxon>Pseudomonadati</taxon>
        <taxon>Pseudomonadota</taxon>
        <taxon>Gammaproteobacteria</taxon>
        <taxon>Enterobacterales</taxon>
        <taxon>Enterobacteriaceae</taxon>
        <taxon>Salmonella</taxon>
    </lineage>
</organism>
<feature type="chain" id="PRO_1000084354" description="Ribosome rescue factor SmrB">
    <location>
        <begin position="1"/>
        <end position="183"/>
    </location>
</feature>
<feature type="domain" description="Smr" evidence="1">
    <location>
        <begin position="98"/>
        <end position="173"/>
    </location>
</feature>
<protein>
    <recommendedName>
        <fullName evidence="1">Ribosome rescue factor SmrB</fullName>
        <ecNumber evidence="1">3.1.-.-</ecNumber>
    </recommendedName>
</protein>
<dbReference type="EC" id="3.1.-.-" evidence="1"/>
<dbReference type="EMBL" id="CP000880">
    <property type="protein sequence ID" value="ABX20439.1"/>
    <property type="molecule type" value="Genomic_DNA"/>
</dbReference>
<dbReference type="SMR" id="A9MJ39"/>
<dbReference type="STRING" id="41514.SARI_00513"/>
<dbReference type="KEGG" id="ses:SARI_00513"/>
<dbReference type="HOGENOM" id="CLU_055978_4_0_6"/>
<dbReference type="Proteomes" id="UP000002084">
    <property type="component" value="Chromosome"/>
</dbReference>
<dbReference type="GO" id="GO:0004521">
    <property type="term" value="F:RNA endonuclease activity"/>
    <property type="evidence" value="ECO:0007669"/>
    <property type="project" value="UniProtKB-UniRule"/>
</dbReference>
<dbReference type="GO" id="GO:0019843">
    <property type="term" value="F:rRNA binding"/>
    <property type="evidence" value="ECO:0007669"/>
    <property type="project" value="UniProtKB-UniRule"/>
</dbReference>
<dbReference type="GO" id="GO:0072344">
    <property type="term" value="P:rescue of stalled ribosome"/>
    <property type="evidence" value="ECO:0007669"/>
    <property type="project" value="UniProtKB-UniRule"/>
</dbReference>
<dbReference type="Gene3D" id="3.30.1370.110">
    <property type="match status" value="1"/>
</dbReference>
<dbReference type="HAMAP" id="MF_01042">
    <property type="entry name" value="SmrB"/>
    <property type="match status" value="1"/>
</dbReference>
<dbReference type="InterPro" id="IPR002625">
    <property type="entry name" value="Smr_dom"/>
</dbReference>
<dbReference type="InterPro" id="IPR036063">
    <property type="entry name" value="Smr_dom_sf"/>
</dbReference>
<dbReference type="InterPro" id="IPR022990">
    <property type="entry name" value="SmrB-like"/>
</dbReference>
<dbReference type="NCBIfam" id="NF003432">
    <property type="entry name" value="PRK04946.1"/>
    <property type="match status" value="1"/>
</dbReference>
<dbReference type="PANTHER" id="PTHR35562">
    <property type="entry name" value="DNA ENDONUCLEASE SMRA-RELATED"/>
    <property type="match status" value="1"/>
</dbReference>
<dbReference type="PANTHER" id="PTHR35562:SF1">
    <property type="entry name" value="UPF0115 PROTEIN YFCN"/>
    <property type="match status" value="1"/>
</dbReference>
<dbReference type="Pfam" id="PF01713">
    <property type="entry name" value="Smr"/>
    <property type="match status" value="1"/>
</dbReference>
<dbReference type="SMART" id="SM00463">
    <property type="entry name" value="SMR"/>
    <property type="match status" value="1"/>
</dbReference>
<dbReference type="SUPFAM" id="SSF160443">
    <property type="entry name" value="SMR domain-like"/>
    <property type="match status" value="1"/>
</dbReference>
<dbReference type="PROSITE" id="PS50828">
    <property type="entry name" value="SMR"/>
    <property type="match status" value="1"/>
</dbReference>
<name>SMRB_SALAR</name>
<keyword id="KW-0255">Endonuclease</keyword>
<keyword id="KW-0378">Hydrolase</keyword>
<keyword id="KW-0540">Nuclease</keyword>
<keyword id="KW-1185">Reference proteome</keyword>
<keyword id="KW-0694">RNA-binding</keyword>
<keyword id="KW-0699">rRNA-binding</keyword>
<accession>A9MJ39</accession>
<gene>
    <name evidence="1" type="primary">smrB</name>
    <name type="ordered locus">SARI_00513</name>
</gene>